<evidence type="ECO:0000250" key="1"/>
<evidence type="ECO:0000269" key="2">
    <source>
    </source>
</evidence>
<evidence type="ECO:0000269" key="3">
    <source>
    </source>
</evidence>
<evidence type="ECO:0000269" key="4">
    <source>
    </source>
</evidence>
<evidence type="ECO:0000305" key="5"/>
<evidence type="ECO:0007744" key="6">
    <source>
    </source>
</evidence>
<comment type="function">
    <text>May act as a scaffolding protein within caveolar membranes, functionally participating in formation of caveolae or caveolae-like vesicles. May be involved in epidermal cell adhesion and epidermal structure and function.</text>
</comment>
<comment type="subunit">
    <text evidence="1 2">Heterooligomeric complex of flotillin-1 and flotillin-2 and caveolin-1 and caveolin-2 (By similarity). Interacts with ECPAS.</text>
</comment>
<comment type="interaction">
    <interactant intactId="EBI-348613">
        <id>Q14254</id>
    </interactant>
    <interactant intactId="EBI-603643">
        <id>O75955</id>
        <label>FLOT1</label>
    </interactant>
    <organismsDiffer>false</organismsDiffer>
    <experiments>6</experiments>
</comment>
<comment type="interaction">
    <interactant intactId="EBI-348613">
        <id>Q14254</id>
    </interactant>
    <interactant intactId="EBI-9776333">
        <id>Q6FHG5</id>
        <label>SNCG</label>
    </interactant>
    <organismsDiffer>false</organismsDiffer>
    <experiments>2</experiments>
</comment>
<comment type="subcellular location">
    <subcellularLocation>
        <location evidence="2">Cell membrane</location>
        <topology evidence="2">Peripheral membrane protein</topology>
    </subcellularLocation>
    <subcellularLocation>
        <location evidence="2">Membrane</location>
        <location evidence="2">Caveola</location>
        <topology evidence="2">Peripheral membrane protein</topology>
    </subcellularLocation>
    <subcellularLocation>
        <location evidence="2">Endosome</location>
    </subcellularLocation>
    <subcellularLocation>
        <location evidence="5">Membrane</location>
        <topology evidence="5">Lipid-anchor</topology>
    </subcellularLocation>
    <text>Membrane-associated protein of caveolae.</text>
</comment>
<comment type="tissue specificity">
    <text>In skin, expressed in epidermis and epidermal appendages but not in dermis. Expressed in all layers of the epidermis except the basal layer. In hair follicles, expressed in the suprabasal layer but not the basal layer. Also expressed in melanoma and carcinoma cell lines, fibroblasts and foreskin melanocytes.</text>
</comment>
<comment type="PTM">
    <text evidence="3">ZDHHC5-catalyzed palmitoylation predominantly occurs at Cys-4. ZDHHC5-catalyzed palmitoylation may be required for the formation of higher-order complexes and for neurite outgrowth in cultured neural stem cells.</text>
</comment>
<comment type="similarity">
    <text evidence="5">Belongs to the band 7/mec-2 family. Flotillin subfamily.</text>
</comment>
<comment type="sequence caution" evidence="5">
    <conflict type="erroneous initiation">
        <sequence resource="EMBL-CDS" id="AAA65729"/>
    </conflict>
    <text>Truncated N-terminus.</text>
</comment>
<accession>Q14254</accession>
<sequence length="428" mass="47064">MGNCHTVGPNEALVVSGGCCGSDYKQYVFGGWAWAWWCISDTQRISLEIMTLQPRCEDVETAEGVALTVTGVAQVKIMTEKELLAVACEQFLGKNVQDIKNVVLQTLEGHLRSILGTLTVEQIYQDRDQFAKLVREVAAPDVGRMGIEILSFTIKDVYDKVDYLSSLGKTQTAVVQRDADIGVAEAERDAGIREAECKKEMLDVKFMADTKIADSKRAFELQKSAFSEEVNIKTAEAQLAYELQGAREQQKIRQEEIEIEVVQRKKQIAVEAQEILRTDKELIATVRRPAEAEAHRIQQIAEGEKVKQVLLAQAEAEKIRKIGEAEAAVIEAMGKAEAERMKLKAEAYQKYGDAAKMALVLEALPQIAAKIAAPLTKVDEIVVLSGDNSKVTSEVNRLLAELPASVHALTGVDLSKIPLIKKATGVQV</sequence>
<reference key="1">
    <citation type="journal article" date="2006" name="Nature">
        <title>DNA sequence of human chromosome 17 and analysis of rearrangement in the human lineage.</title>
        <authorList>
            <person name="Zody M.C."/>
            <person name="Garber M."/>
            <person name="Adams D.J."/>
            <person name="Sharpe T."/>
            <person name="Harrow J."/>
            <person name="Lupski J.R."/>
            <person name="Nicholson C."/>
            <person name="Searle S.M."/>
            <person name="Wilming L."/>
            <person name="Young S.K."/>
            <person name="Abouelleil A."/>
            <person name="Allen N.R."/>
            <person name="Bi W."/>
            <person name="Bloom T."/>
            <person name="Borowsky M.L."/>
            <person name="Bugalter B.E."/>
            <person name="Butler J."/>
            <person name="Chang J.L."/>
            <person name="Chen C.-K."/>
            <person name="Cook A."/>
            <person name="Corum B."/>
            <person name="Cuomo C.A."/>
            <person name="de Jong P.J."/>
            <person name="DeCaprio D."/>
            <person name="Dewar K."/>
            <person name="FitzGerald M."/>
            <person name="Gilbert J."/>
            <person name="Gibson R."/>
            <person name="Gnerre S."/>
            <person name="Goldstein S."/>
            <person name="Grafham D.V."/>
            <person name="Grocock R."/>
            <person name="Hafez N."/>
            <person name="Hagopian D.S."/>
            <person name="Hart E."/>
            <person name="Norman C.H."/>
            <person name="Humphray S."/>
            <person name="Jaffe D.B."/>
            <person name="Jones M."/>
            <person name="Kamal M."/>
            <person name="Khodiyar V.K."/>
            <person name="LaButti K."/>
            <person name="Laird G."/>
            <person name="Lehoczky J."/>
            <person name="Liu X."/>
            <person name="Lokyitsang T."/>
            <person name="Loveland J."/>
            <person name="Lui A."/>
            <person name="Macdonald P."/>
            <person name="Major J.E."/>
            <person name="Matthews L."/>
            <person name="Mauceli E."/>
            <person name="McCarroll S.A."/>
            <person name="Mihalev A.H."/>
            <person name="Mudge J."/>
            <person name="Nguyen C."/>
            <person name="Nicol R."/>
            <person name="O'Leary S.B."/>
            <person name="Osoegawa K."/>
            <person name="Schwartz D.C."/>
            <person name="Shaw-Smith C."/>
            <person name="Stankiewicz P."/>
            <person name="Steward C."/>
            <person name="Swarbreck D."/>
            <person name="Venkataraman V."/>
            <person name="Whittaker C.A."/>
            <person name="Yang X."/>
            <person name="Zimmer A.R."/>
            <person name="Bradley A."/>
            <person name="Hubbard T."/>
            <person name="Birren B.W."/>
            <person name="Rogers J."/>
            <person name="Lander E.S."/>
            <person name="Nusbaum C."/>
        </authorList>
    </citation>
    <scope>NUCLEOTIDE SEQUENCE [LARGE SCALE GENOMIC DNA]</scope>
</reference>
<reference key="2">
    <citation type="journal article" date="1994" name="J. Biol. Chem.">
        <title>Cloning and characterization of a novel epidermal cell surface antigen (ESA).</title>
        <authorList>
            <person name="Schroeder W.T."/>
            <person name="Stewart-Galetka S."/>
            <person name="Mandavilli S."/>
            <person name="Parry D.A."/>
            <person name="Goldsmith L."/>
            <person name="Duvic M."/>
        </authorList>
    </citation>
    <scope>NUCLEOTIDE SEQUENCE [MRNA] OF 8-428</scope>
    <source>
        <tissue>Keratinocyte</tissue>
    </source>
</reference>
<reference key="3">
    <citation type="journal article" date="2004" name="Genome Res.">
        <title>The status, quality, and expansion of the NIH full-length cDNA project: the Mammalian Gene Collection (MGC).</title>
        <authorList>
            <consortium name="The MGC Project Team"/>
        </authorList>
    </citation>
    <scope>NUCLEOTIDE SEQUENCE [LARGE SCALE MRNA] OF 20-428</scope>
    <source>
        <tissue>Pancreas</tissue>
    </source>
</reference>
<reference key="4">
    <citation type="submission" date="2003-05" db="EMBL/GenBank/DDBJ databases">
        <title>Cloning of human full-length CDSs in BD Creator(TM) system donor vector.</title>
        <authorList>
            <person name="Kalnine N."/>
            <person name="Chen X."/>
            <person name="Rolfs A."/>
            <person name="Halleck A."/>
            <person name="Hines L."/>
            <person name="Eisenstein S."/>
            <person name="Koundinya M."/>
            <person name="Raphael J."/>
            <person name="Moreira D."/>
            <person name="Kelley T."/>
            <person name="LaBaer J."/>
            <person name="Lin Y."/>
            <person name="Phelan M."/>
            <person name="Farmer A."/>
        </authorList>
    </citation>
    <scope>NUCLEOTIDE SEQUENCE [LARGE SCALE MRNA] OF 50-428</scope>
</reference>
<reference key="5">
    <citation type="journal article" date="2010" name="J. Biol. Chem.">
        <title>A protein interaction network for Ecm29 links the 26 S proteasome to molecular motors and endosomal components.</title>
        <authorList>
            <person name="Gorbea C."/>
            <person name="Pratt G."/>
            <person name="Ustrell V."/>
            <person name="Bell R."/>
            <person name="Sahasrabudhe S."/>
            <person name="Hughes R.E."/>
            <person name="Rechsteiner M."/>
        </authorList>
    </citation>
    <scope>SUBCELLULAR LOCATION</scope>
    <scope>INTERACTION WITH ECPAS</scope>
</reference>
<reference key="6">
    <citation type="journal article" date="2011" name="BMC Syst. Biol.">
        <title>Initial characterization of the human central proteome.</title>
        <authorList>
            <person name="Burkard T.R."/>
            <person name="Planyavsky M."/>
            <person name="Kaupe I."/>
            <person name="Breitwieser F.P."/>
            <person name="Buerckstuemmer T."/>
            <person name="Bennett K.L."/>
            <person name="Superti-Furga G."/>
            <person name="Colinge J."/>
        </authorList>
    </citation>
    <scope>IDENTIFICATION BY MASS SPECTROMETRY [LARGE SCALE ANALYSIS]</scope>
</reference>
<reference key="7">
    <citation type="journal article" date="2012" name="J. Biol. Chem.">
        <title>DHHC5 protein palmitoylates flotillin-2 and is rapidly degraded on induction of neuronal differentiation in cultured cells.</title>
        <authorList>
            <person name="Li Y."/>
            <person name="Martin B.R."/>
            <person name="Cravatt B.F."/>
            <person name="Hofmann S.L."/>
        </authorList>
    </citation>
    <scope>PALMITOYLATION AT CYS-4; CYS-19 AND CYS-20</scope>
    <scope>MUTAGENESIS OF CYS-4; CYS-19 AND CYS-20</scope>
</reference>
<reference key="8">
    <citation type="journal article" date="2014" name="J. Proteomics">
        <title>An enzyme assisted RP-RPLC approach for in-depth analysis of human liver phosphoproteome.</title>
        <authorList>
            <person name="Bian Y."/>
            <person name="Song C."/>
            <person name="Cheng K."/>
            <person name="Dong M."/>
            <person name="Wang F."/>
            <person name="Huang J."/>
            <person name="Sun D."/>
            <person name="Wang L."/>
            <person name="Ye M."/>
            <person name="Zou H."/>
        </authorList>
    </citation>
    <scope>PHOSPHORYLATION [LARGE SCALE ANALYSIS] AT SER-405</scope>
    <scope>IDENTIFICATION BY MASS SPECTROMETRY [LARGE SCALE ANALYSIS]</scope>
    <source>
        <tissue>Liver</tissue>
    </source>
</reference>
<reference key="9">
    <citation type="journal article" date="2014" name="Nat. Commun.">
        <title>Global profiling of co- and post-translationally N-myristoylated proteomes in human cells.</title>
        <authorList>
            <person name="Thinon E."/>
            <person name="Serwa R.A."/>
            <person name="Broncel M."/>
            <person name="Brannigan J.A."/>
            <person name="Brassat U."/>
            <person name="Wright M.H."/>
            <person name="Heal W.P."/>
            <person name="Wilkinson A.J."/>
            <person name="Mann D.J."/>
            <person name="Tate E.W."/>
        </authorList>
    </citation>
    <scope>MYRISTOYLATION AT GLY-2</scope>
    <scope>CLEAVAGE OF INITIATOR METHIONINE</scope>
    <scope>IDENTIFICATION BY MASS SPECTROMETRY</scope>
</reference>
<organism>
    <name type="scientific">Homo sapiens</name>
    <name type="common">Human</name>
    <dbReference type="NCBI Taxonomy" id="9606"/>
    <lineage>
        <taxon>Eukaryota</taxon>
        <taxon>Metazoa</taxon>
        <taxon>Chordata</taxon>
        <taxon>Craniata</taxon>
        <taxon>Vertebrata</taxon>
        <taxon>Euteleostomi</taxon>
        <taxon>Mammalia</taxon>
        <taxon>Eutheria</taxon>
        <taxon>Euarchontoglires</taxon>
        <taxon>Primates</taxon>
        <taxon>Haplorrhini</taxon>
        <taxon>Catarrhini</taxon>
        <taxon>Hominidae</taxon>
        <taxon>Homo</taxon>
    </lineage>
</organism>
<name>FLOT2_HUMAN</name>
<protein>
    <recommendedName>
        <fullName>Flotillin-2</fullName>
    </recommendedName>
    <alternativeName>
        <fullName>Epidermal surface antigen</fullName>
        <shortName>ESA</shortName>
    </alternativeName>
    <alternativeName>
        <fullName>Membrane component chromosome 17 surface marker 1</fullName>
    </alternativeName>
</protein>
<proteinExistence type="evidence at protein level"/>
<gene>
    <name type="primary">FLOT2</name>
    <name type="synonym">ESA1</name>
    <name type="synonym">M17S1</name>
</gene>
<dbReference type="EMBL" id="AC024267">
    <property type="status" value="NOT_ANNOTATED_CDS"/>
    <property type="molecule type" value="Genomic_DNA"/>
</dbReference>
<dbReference type="EMBL" id="M60922">
    <property type="protein sequence ID" value="AAA65729.1"/>
    <property type="status" value="ALT_INIT"/>
    <property type="molecule type" value="mRNA"/>
</dbReference>
<dbReference type="EMBL" id="BC017292">
    <property type="protein sequence ID" value="AAH17292.2"/>
    <property type="molecule type" value="mRNA"/>
</dbReference>
<dbReference type="EMBL" id="BT019478">
    <property type="protein sequence ID" value="AAV38285.1"/>
    <property type="molecule type" value="mRNA"/>
</dbReference>
<dbReference type="CCDS" id="CCDS11245.2"/>
<dbReference type="PIR" id="A53664">
    <property type="entry name" value="A53664"/>
</dbReference>
<dbReference type="RefSeq" id="NP_004466.2">
    <property type="nucleotide sequence ID" value="NM_004475.3"/>
</dbReference>
<dbReference type="RefSeq" id="XP_016879883.1">
    <property type="nucleotide sequence ID" value="XM_017024394.1"/>
</dbReference>
<dbReference type="RefSeq" id="XP_016879884.1">
    <property type="nucleotide sequence ID" value="XM_017024395.1"/>
</dbReference>
<dbReference type="BMRB" id="Q14254"/>
<dbReference type="SMR" id="Q14254"/>
<dbReference type="BioGRID" id="108608">
    <property type="interactions" value="338"/>
</dbReference>
<dbReference type="CORUM" id="Q14254"/>
<dbReference type="FunCoup" id="Q14254">
    <property type="interactions" value="524"/>
</dbReference>
<dbReference type="IntAct" id="Q14254">
    <property type="interactions" value="179"/>
</dbReference>
<dbReference type="MINT" id="Q14254"/>
<dbReference type="STRING" id="9606.ENSP00000378368"/>
<dbReference type="GlyGen" id="Q14254">
    <property type="glycosylation" value="1 site, 1 O-linked glycan (1 site)"/>
</dbReference>
<dbReference type="iPTMnet" id="Q14254"/>
<dbReference type="PhosphoSitePlus" id="Q14254"/>
<dbReference type="SwissPalm" id="Q14254"/>
<dbReference type="BioMuta" id="FLOT2"/>
<dbReference type="DMDM" id="254763294"/>
<dbReference type="jPOST" id="Q14254"/>
<dbReference type="MassIVE" id="Q14254"/>
<dbReference type="PaxDb" id="9606-ENSP00000378368"/>
<dbReference type="PeptideAtlas" id="Q14254"/>
<dbReference type="ProteomicsDB" id="59951"/>
<dbReference type="Pumba" id="Q14254"/>
<dbReference type="Antibodypedia" id="666">
    <property type="antibodies" value="332 antibodies from 38 providers"/>
</dbReference>
<dbReference type="DNASU" id="2319"/>
<dbReference type="Ensembl" id="ENST00000394908.9">
    <property type="protein sequence ID" value="ENSP00000378368.3"/>
    <property type="gene ID" value="ENSG00000132589.16"/>
</dbReference>
<dbReference type="GeneID" id="2319"/>
<dbReference type="KEGG" id="hsa:2319"/>
<dbReference type="MANE-Select" id="ENST00000394908.9">
    <property type="protein sequence ID" value="ENSP00000378368.3"/>
    <property type="RefSeq nucleotide sequence ID" value="NM_004475.3"/>
    <property type="RefSeq protein sequence ID" value="NP_004466.2"/>
</dbReference>
<dbReference type="UCSC" id="uc002hdc.4">
    <property type="organism name" value="human"/>
</dbReference>
<dbReference type="AGR" id="HGNC:3758"/>
<dbReference type="CTD" id="2319"/>
<dbReference type="DisGeNET" id="2319"/>
<dbReference type="GeneCards" id="FLOT2"/>
<dbReference type="HGNC" id="HGNC:3758">
    <property type="gene designation" value="FLOT2"/>
</dbReference>
<dbReference type="HPA" id="ENSG00000132589">
    <property type="expression patterns" value="Low tissue specificity"/>
</dbReference>
<dbReference type="MIM" id="131560">
    <property type="type" value="gene"/>
</dbReference>
<dbReference type="neXtProt" id="NX_Q14254"/>
<dbReference type="OpenTargets" id="ENSG00000132589"/>
<dbReference type="PharmGKB" id="PA28176"/>
<dbReference type="VEuPathDB" id="HostDB:ENSG00000132589"/>
<dbReference type="eggNOG" id="KOG2668">
    <property type="taxonomic scope" value="Eukaryota"/>
</dbReference>
<dbReference type="GeneTree" id="ENSGT00560000077232"/>
<dbReference type="HOGENOM" id="CLU_038134_1_0_1"/>
<dbReference type="InParanoid" id="Q14254"/>
<dbReference type="OMA" id="MWRVAEP"/>
<dbReference type="OrthoDB" id="6080404at2759"/>
<dbReference type="PAN-GO" id="Q14254">
    <property type="GO annotations" value="5 GO annotations based on evolutionary models"/>
</dbReference>
<dbReference type="PhylomeDB" id="Q14254"/>
<dbReference type="TreeFam" id="TF324879"/>
<dbReference type="PathwayCommons" id="Q14254"/>
<dbReference type="Reactome" id="R-HSA-5213460">
    <property type="pathway name" value="RIPK1-mediated regulated necrosis"/>
</dbReference>
<dbReference type="Reactome" id="R-HSA-5675482">
    <property type="pathway name" value="Regulation of necroptotic cell death"/>
</dbReference>
<dbReference type="Reactome" id="R-HSA-8849932">
    <property type="pathway name" value="Synaptic adhesion-like molecules"/>
</dbReference>
<dbReference type="Reactome" id="R-HSA-8980692">
    <property type="pathway name" value="RHOA GTPase cycle"/>
</dbReference>
<dbReference type="Reactome" id="R-HSA-9013026">
    <property type="pathway name" value="RHOB GTPase cycle"/>
</dbReference>
<dbReference type="Reactome" id="R-HSA-9013106">
    <property type="pathway name" value="RHOC GTPase cycle"/>
</dbReference>
<dbReference type="Reactome" id="R-HSA-9696264">
    <property type="pathway name" value="RND3 GTPase cycle"/>
</dbReference>
<dbReference type="Reactome" id="R-HSA-9696273">
    <property type="pathway name" value="RND1 GTPase cycle"/>
</dbReference>
<dbReference type="SignaLink" id="Q14254"/>
<dbReference type="BioGRID-ORCS" id="2319">
    <property type="hits" value="13 hits in 1152 CRISPR screens"/>
</dbReference>
<dbReference type="CD-CODE" id="FB4E32DD">
    <property type="entry name" value="Presynaptic clusters and postsynaptic densities"/>
</dbReference>
<dbReference type="ChiTaRS" id="FLOT2">
    <property type="organism name" value="human"/>
</dbReference>
<dbReference type="GeneWiki" id="FLOT2"/>
<dbReference type="GenomeRNAi" id="2319"/>
<dbReference type="Pharos" id="Q14254">
    <property type="development level" value="Tbio"/>
</dbReference>
<dbReference type="PRO" id="PR:Q14254"/>
<dbReference type="Proteomes" id="UP000005640">
    <property type="component" value="Chromosome 17"/>
</dbReference>
<dbReference type="RNAct" id="Q14254">
    <property type="molecule type" value="protein"/>
</dbReference>
<dbReference type="Bgee" id="ENSG00000132589">
    <property type="expression patterns" value="Expressed in granulocyte and 195 other cell types or tissues"/>
</dbReference>
<dbReference type="ExpressionAtlas" id="Q14254">
    <property type="expression patterns" value="baseline and differential"/>
</dbReference>
<dbReference type="GO" id="GO:0002080">
    <property type="term" value="C:acrosomal membrane"/>
    <property type="evidence" value="ECO:0007669"/>
    <property type="project" value="Ensembl"/>
</dbReference>
<dbReference type="GO" id="GO:0005912">
    <property type="term" value="C:adherens junction"/>
    <property type="evidence" value="ECO:0000314"/>
    <property type="project" value="UniProtKB"/>
</dbReference>
<dbReference type="GO" id="GO:0016323">
    <property type="term" value="C:basolateral plasma membrane"/>
    <property type="evidence" value="ECO:0000314"/>
    <property type="project" value="UniProtKB"/>
</dbReference>
<dbReference type="GO" id="GO:0005901">
    <property type="term" value="C:caveola"/>
    <property type="evidence" value="ECO:0000314"/>
    <property type="project" value="MGI"/>
</dbReference>
<dbReference type="GO" id="GO:0044291">
    <property type="term" value="C:cell-cell contact zone"/>
    <property type="evidence" value="ECO:0000314"/>
    <property type="project" value="UniProtKB"/>
</dbReference>
<dbReference type="GO" id="GO:0031410">
    <property type="term" value="C:cytoplasmic vesicle"/>
    <property type="evidence" value="ECO:0000314"/>
    <property type="project" value="UniProtKB"/>
</dbReference>
<dbReference type="GO" id="GO:0032839">
    <property type="term" value="C:dendrite cytoplasm"/>
    <property type="evidence" value="ECO:0007669"/>
    <property type="project" value="GOC"/>
</dbReference>
<dbReference type="GO" id="GO:0030139">
    <property type="term" value="C:endocytic vesicle"/>
    <property type="evidence" value="ECO:0000314"/>
    <property type="project" value="UniProtKB"/>
</dbReference>
<dbReference type="GO" id="GO:0005768">
    <property type="term" value="C:endosome"/>
    <property type="evidence" value="ECO:0000314"/>
    <property type="project" value="UniProtKB"/>
</dbReference>
<dbReference type="GO" id="GO:0070062">
    <property type="term" value="C:extracellular exosome"/>
    <property type="evidence" value="ECO:0007005"/>
    <property type="project" value="UniProtKB"/>
</dbReference>
<dbReference type="GO" id="GO:0016600">
    <property type="term" value="C:flotillin complex"/>
    <property type="evidence" value="ECO:0000314"/>
    <property type="project" value="UniProtKB"/>
</dbReference>
<dbReference type="GO" id="GO:0005925">
    <property type="term" value="C:focal adhesion"/>
    <property type="evidence" value="ECO:0007005"/>
    <property type="project" value="UniProtKB"/>
</dbReference>
<dbReference type="GO" id="GO:0098978">
    <property type="term" value="C:glutamatergic synapse"/>
    <property type="evidence" value="ECO:0007669"/>
    <property type="project" value="Ensembl"/>
</dbReference>
<dbReference type="GO" id="GO:0043231">
    <property type="term" value="C:intracellular membrane-bounded organelle"/>
    <property type="evidence" value="ECO:0000314"/>
    <property type="project" value="HPA"/>
</dbReference>
<dbReference type="GO" id="GO:0030027">
    <property type="term" value="C:lamellipodium"/>
    <property type="evidence" value="ECO:0000314"/>
    <property type="project" value="UniProtKB"/>
</dbReference>
<dbReference type="GO" id="GO:0016020">
    <property type="term" value="C:membrane"/>
    <property type="evidence" value="ECO:0007005"/>
    <property type="project" value="UniProtKB"/>
</dbReference>
<dbReference type="GO" id="GO:0048471">
    <property type="term" value="C:perinuclear region of cytoplasm"/>
    <property type="evidence" value="ECO:0000314"/>
    <property type="project" value="UniProtKB"/>
</dbReference>
<dbReference type="GO" id="GO:0005886">
    <property type="term" value="C:plasma membrane"/>
    <property type="evidence" value="ECO:0000314"/>
    <property type="project" value="HPA"/>
</dbReference>
<dbReference type="GO" id="GO:0001931">
    <property type="term" value="C:uropod"/>
    <property type="evidence" value="ECO:0000314"/>
    <property type="project" value="UniProtKB"/>
</dbReference>
<dbReference type="GO" id="GO:0031982">
    <property type="term" value="C:vesicle"/>
    <property type="evidence" value="ECO:0000314"/>
    <property type="project" value="UniProtKB"/>
</dbReference>
<dbReference type="GO" id="GO:0002020">
    <property type="term" value="F:protease binding"/>
    <property type="evidence" value="ECO:0000318"/>
    <property type="project" value="GO_Central"/>
</dbReference>
<dbReference type="GO" id="GO:0098937">
    <property type="term" value="P:anterograde dendritic transport"/>
    <property type="evidence" value="ECO:0007669"/>
    <property type="project" value="Ensembl"/>
</dbReference>
<dbReference type="GO" id="GO:0007155">
    <property type="term" value="P:cell adhesion"/>
    <property type="evidence" value="ECO:0000303"/>
    <property type="project" value="ProtInc"/>
</dbReference>
<dbReference type="GO" id="GO:0008544">
    <property type="term" value="P:epidermis development"/>
    <property type="evidence" value="ECO:0000304"/>
    <property type="project" value="ProtInc"/>
</dbReference>
<dbReference type="GO" id="GO:1902992">
    <property type="term" value="P:negative regulation of amyloid precursor protein catabolic process"/>
    <property type="evidence" value="ECO:0000315"/>
    <property type="project" value="UniProtKB"/>
</dbReference>
<dbReference type="GO" id="GO:0010629">
    <property type="term" value="P:negative regulation of gene expression"/>
    <property type="evidence" value="ECO:0000315"/>
    <property type="project" value="UniProtKB"/>
</dbReference>
<dbReference type="GO" id="GO:0043123">
    <property type="term" value="P:positive regulation of canonical NF-kappaB signal transduction"/>
    <property type="evidence" value="ECO:0000315"/>
    <property type="project" value="ARUK-UCL"/>
</dbReference>
<dbReference type="GO" id="GO:1903905">
    <property type="term" value="P:positive regulation of establishment of T cell polarity"/>
    <property type="evidence" value="ECO:0000315"/>
    <property type="project" value="UniProtKB"/>
</dbReference>
<dbReference type="GO" id="GO:0072659">
    <property type="term" value="P:protein localization to plasma membrane"/>
    <property type="evidence" value="ECO:0000315"/>
    <property type="project" value="UniProtKB"/>
</dbReference>
<dbReference type="GO" id="GO:0044860">
    <property type="term" value="P:protein localization to plasma membrane raft"/>
    <property type="evidence" value="ECO:0000315"/>
    <property type="project" value="UniProtKB"/>
</dbReference>
<dbReference type="GO" id="GO:0050821">
    <property type="term" value="P:protein stabilization"/>
    <property type="evidence" value="ECO:0000315"/>
    <property type="project" value="UniProtKB"/>
</dbReference>
<dbReference type="GO" id="GO:0045661">
    <property type="term" value="P:regulation of myoblast differentiation"/>
    <property type="evidence" value="ECO:0000270"/>
    <property type="project" value="UniProtKB"/>
</dbReference>
<dbReference type="GO" id="GO:0099072">
    <property type="term" value="P:regulation of postsynaptic membrane neurotransmitter receptor levels"/>
    <property type="evidence" value="ECO:0007669"/>
    <property type="project" value="Ensembl"/>
</dbReference>
<dbReference type="CDD" id="cd03399">
    <property type="entry name" value="SPFH_flotillin"/>
    <property type="match status" value="1"/>
</dbReference>
<dbReference type="FunFam" id="3.30.479.30:FF:000003">
    <property type="entry name" value="Flotillin 2"/>
    <property type="match status" value="1"/>
</dbReference>
<dbReference type="Gene3D" id="3.30.479.30">
    <property type="entry name" value="Band 7 domain"/>
    <property type="match status" value="1"/>
</dbReference>
<dbReference type="InterPro" id="IPR001107">
    <property type="entry name" value="Band_7"/>
</dbReference>
<dbReference type="InterPro" id="IPR036013">
    <property type="entry name" value="Band_7/SPFH_dom_sf"/>
</dbReference>
<dbReference type="InterPro" id="IPR027705">
    <property type="entry name" value="Flotillin_fam"/>
</dbReference>
<dbReference type="PANTHER" id="PTHR13806:SF46">
    <property type="entry name" value="FLOTILLIN-1-RELATED"/>
    <property type="match status" value="1"/>
</dbReference>
<dbReference type="PANTHER" id="PTHR13806">
    <property type="entry name" value="FLOTILLIN-RELATED"/>
    <property type="match status" value="1"/>
</dbReference>
<dbReference type="Pfam" id="PF01145">
    <property type="entry name" value="Band_7"/>
    <property type="match status" value="1"/>
</dbReference>
<dbReference type="SMART" id="SM00244">
    <property type="entry name" value="PHB"/>
    <property type="match status" value="1"/>
</dbReference>
<dbReference type="SUPFAM" id="SSF117892">
    <property type="entry name" value="Band 7/SPFH domain"/>
    <property type="match status" value="1"/>
</dbReference>
<keyword id="KW-0130">Cell adhesion</keyword>
<keyword id="KW-1003">Cell membrane</keyword>
<keyword id="KW-0967">Endosome</keyword>
<keyword id="KW-0449">Lipoprotein</keyword>
<keyword id="KW-0472">Membrane</keyword>
<keyword id="KW-0519">Myristate</keyword>
<keyword id="KW-0564">Palmitate</keyword>
<keyword id="KW-0597">Phosphoprotein</keyword>
<keyword id="KW-1267">Proteomics identification</keyword>
<keyword id="KW-1185">Reference proteome</keyword>
<feature type="initiator methionine" description="Removed" evidence="4">
    <location>
        <position position="1"/>
    </location>
</feature>
<feature type="chain" id="PRO_0000094049" description="Flotillin-2">
    <location>
        <begin position="2"/>
        <end position="428"/>
    </location>
</feature>
<feature type="modified residue" description="Phosphoserine" evidence="6">
    <location>
        <position position="405"/>
    </location>
</feature>
<feature type="lipid moiety-binding region" description="N-myristoyl glycine" evidence="4">
    <location>
        <position position="2"/>
    </location>
</feature>
<feature type="lipid moiety-binding region" description="S-palmitoyl cysteine; by ZDHHC5" evidence="3">
    <location>
        <position position="4"/>
    </location>
</feature>
<feature type="lipid moiety-binding region" description="S-palmitoyl cysteine" evidence="3">
    <location>
        <position position="19"/>
    </location>
</feature>
<feature type="lipid moiety-binding region" description="S-palmitoyl cysteine; by ZDHHC5" evidence="3">
    <location>
        <position position="20"/>
    </location>
</feature>
<feature type="sequence variant" id="VAR_024375" description="In dbSNP:rs3736238.">
    <original>A</original>
    <variation>T</variation>
    <location>
        <position position="328"/>
    </location>
</feature>
<feature type="mutagenesis site" description="Loss of ZDHHC5-catalyzed palmitoylation; when associated with S-20. Partial loss of ZDHHC5-catalyzed palmitoylation; when associated with S-19. Complete loss of palmitoylation; when associated with S-19 and S-20." evidence="3">
    <original>C</original>
    <variation>S</variation>
    <location>
        <position position="4"/>
    </location>
</feature>
<feature type="mutagenesis site" description="Partial loss of ZDHHC5-catalyzed palmitoylation; when associated with S-4 or S-20. Complete loss of palmitoylation; when associated with S-4 and S-20." evidence="3">
    <original>C</original>
    <variation>S</variation>
    <location>
        <position position="19"/>
    </location>
</feature>
<feature type="mutagenesis site" description="Loss of ZDHHC5-catalyzed palmitoylation; when associated with S-4. Partial loss of ZDHHC5-catalyzed palmitoylation; when associated with S-19. Complete loss of palmitoylation; when associated with S-4 and S-19." evidence="3">
    <original>C</original>
    <variation>S</variation>
    <location>
        <position position="20"/>
    </location>
</feature>
<feature type="sequence conflict" description="In Ref. 1; AC024267 and 2; AAA65729." evidence="5" ref="1 2">
    <original>G</original>
    <variation>R</variation>
    <location>
        <position position="8"/>
    </location>
</feature>